<sequence length="169" mass="18841">MPESWVPAVGLTLVPSLGGFMGAYFVRGEGLRWYASLQKPSWHPPRWTLAPIWGTLYSAMGYGSYIVWKELGGFTEDAMVPLGLYTGQLALNWAWPPIFFGARQMGWALADLLLVSGVATATTLAWHRVSPPAARLLYPYLAWLAFATVLNYYVWRDNSGRRGGSRLPE</sequence>
<dbReference type="EMBL" id="L17306">
    <property type="protein sequence ID" value="AAA20127.1"/>
    <property type="molecule type" value="mRNA"/>
</dbReference>
<dbReference type="EMBL" id="D21207">
    <property type="protein sequence ID" value="BAA04749.1"/>
    <property type="molecule type" value="mRNA"/>
</dbReference>
<dbReference type="EMBL" id="AY079441">
    <property type="protein sequence ID" value="AAL87529.1"/>
    <property type="molecule type" value="Genomic_DNA"/>
</dbReference>
<dbReference type="EMBL" id="AY079442">
    <property type="protein sequence ID" value="AAL87530.1"/>
    <property type="molecule type" value="Genomic_DNA"/>
</dbReference>
<dbReference type="EMBL" id="AK149743">
    <property type="protein sequence ID" value="BAE29056.1"/>
    <property type="molecule type" value="mRNA"/>
</dbReference>
<dbReference type="EMBL" id="AK150516">
    <property type="protein sequence ID" value="BAE29628.1"/>
    <property type="molecule type" value="mRNA"/>
</dbReference>
<dbReference type="EMBL" id="AK151421">
    <property type="protein sequence ID" value="BAE30386.1"/>
    <property type="molecule type" value="mRNA"/>
</dbReference>
<dbReference type="EMBL" id="AK151569">
    <property type="protein sequence ID" value="BAE30511.1"/>
    <property type="molecule type" value="mRNA"/>
</dbReference>
<dbReference type="EMBL" id="AK151824">
    <property type="protein sequence ID" value="BAE30721.1"/>
    <property type="molecule type" value="mRNA"/>
</dbReference>
<dbReference type="EMBL" id="AK152082">
    <property type="protein sequence ID" value="BAE30932.1"/>
    <property type="molecule type" value="mRNA"/>
</dbReference>
<dbReference type="EMBL" id="AK152827">
    <property type="protein sequence ID" value="BAE31528.1"/>
    <property type="molecule type" value="mRNA"/>
</dbReference>
<dbReference type="EMBL" id="AK153159">
    <property type="protein sequence ID" value="BAE31769.1"/>
    <property type="molecule type" value="mRNA"/>
</dbReference>
<dbReference type="EMBL" id="AK153273">
    <property type="protein sequence ID" value="BAE31860.1"/>
    <property type="molecule type" value="mRNA"/>
</dbReference>
<dbReference type="EMBL" id="AK156489">
    <property type="protein sequence ID" value="BAE33730.1"/>
    <property type="molecule type" value="mRNA"/>
</dbReference>
<dbReference type="EMBL" id="AK165450">
    <property type="protein sequence ID" value="BAE38192.1"/>
    <property type="molecule type" value="mRNA"/>
</dbReference>
<dbReference type="EMBL" id="AK165822">
    <property type="protein sequence ID" value="BAE38396.1"/>
    <property type="molecule type" value="mRNA"/>
</dbReference>
<dbReference type="EMBL" id="AK166125">
    <property type="protein sequence ID" value="BAE38585.1"/>
    <property type="molecule type" value="mRNA"/>
</dbReference>
<dbReference type="EMBL" id="AK172384">
    <property type="protein sequence ID" value="BAE42976.1"/>
    <property type="molecule type" value="mRNA"/>
</dbReference>
<dbReference type="EMBL" id="CH466550">
    <property type="protein sequence ID" value="EDL04468.1"/>
    <property type="molecule type" value="Genomic_DNA"/>
</dbReference>
<dbReference type="EMBL" id="BC002055">
    <property type="protein sequence ID" value="AAH02055.1"/>
    <property type="molecule type" value="mRNA"/>
</dbReference>
<dbReference type="EMBL" id="U12419">
    <property type="protein sequence ID" value="AAA83253.1"/>
    <property type="molecule type" value="Genomic_DNA"/>
</dbReference>
<dbReference type="CCDS" id="CCDS27705.1"/>
<dbReference type="PIR" id="A53405">
    <property type="entry name" value="A53405"/>
</dbReference>
<dbReference type="PIR" id="I57953">
    <property type="entry name" value="I57953"/>
</dbReference>
<dbReference type="RefSeq" id="NP_033905.3">
    <property type="nucleotide sequence ID" value="NM_009775.4"/>
</dbReference>
<dbReference type="PDB" id="2MGY">
    <property type="method" value="NMR"/>
    <property type="chains" value="A=1-167"/>
</dbReference>
<dbReference type="PDB" id="2N02">
    <property type="method" value="NMR"/>
    <property type="chains" value="A=1-169"/>
</dbReference>
<dbReference type="PDBsum" id="2MGY"/>
<dbReference type="PDBsum" id="2N02"/>
<dbReference type="BMRB" id="P50637"/>
<dbReference type="SMR" id="P50637"/>
<dbReference type="BioGRID" id="198410">
    <property type="interactions" value="2"/>
</dbReference>
<dbReference type="FunCoup" id="P50637">
    <property type="interactions" value="1555"/>
</dbReference>
<dbReference type="STRING" id="10090.ENSMUSP00000037039"/>
<dbReference type="BindingDB" id="P50637"/>
<dbReference type="ChEMBL" id="CHEMBL2149"/>
<dbReference type="iPTMnet" id="P50637"/>
<dbReference type="PhosphoSitePlus" id="P50637"/>
<dbReference type="jPOST" id="P50637"/>
<dbReference type="PaxDb" id="10090-ENSMUSP00000037039"/>
<dbReference type="PeptideAtlas" id="P50637"/>
<dbReference type="ProteomicsDB" id="297667"/>
<dbReference type="Pumba" id="P50637"/>
<dbReference type="TopDownProteomics" id="P50637"/>
<dbReference type="Antibodypedia" id="27480">
    <property type="antibodies" value="299 antibodies from 40 providers"/>
</dbReference>
<dbReference type="DNASU" id="12257"/>
<dbReference type="Ensembl" id="ENSMUST00000047419.8">
    <property type="protein sequence ID" value="ENSMUSP00000037039.7"/>
    <property type="gene ID" value="ENSMUSG00000041736.8"/>
</dbReference>
<dbReference type="GeneID" id="12257"/>
<dbReference type="KEGG" id="mmu:12257"/>
<dbReference type="UCSC" id="uc007xbg.2">
    <property type="organism name" value="mouse"/>
</dbReference>
<dbReference type="AGR" id="MGI:88222"/>
<dbReference type="CTD" id="706"/>
<dbReference type="MGI" id="MGI:88222">
    <property type="gene designation" value="Tspo"/>
</dbReference>
<dbReference type="VEuPathDB" id="HostDB:ENSMUSG00000041736"/>
<dbReference type="eggNOG" id="KOG3797">
    <property type="taxonomic scope" value="Eukaryota"/>
</dbReference>
<dbReference type="GeneTree" id="ENSGT00390000012980"/>
<dbReference type="HOGENOM" id="CLU_091805_2_1_1"/>
<dbReference type="InParanoid" id="P50637"/>
<dbReference type="OMA" id="WSWLFFG"/>
<dbReference type="OrthoDB" id="8841220at2759"/>
<dbReference type="PhylomeDB" id="P50637"/>
<dbReference type="TreeFam" id="TF342852"/>
<dbReference type="Reactome" id="R-MMU-196108">
    <property type="pathway name" value="Pregnenolone biosynthesis"/>
</dbReference>
<dbReference type="BioGRID-ORCS" id="12257">
    <property type="hits" value="5 hits in 78 CRISPR screens"/>
</dbReference>
<dbReference type="ChiTaRS" id="Tspo">
    <property type="organism name" value="mouse"/>
</dbReference>
<dbReference type="EvolutionaryTrace" id="P50637"/>
<dbReference type="PRO" id="PR:P50637"/>
<dbReference type="Proteomes" id="UP000000589">
    <property type="component" value="Chromosome 15"/>
</dbReference>
<dbReference type="RNAct" id="P50637">
    <property type="molecule type" value="protein"/>
</dbReference>
<dbReference type="Bgee" id="ENSMUSG00000041736">
    <property type="expression patterns" value="Expressed in thoracic mammary gland and 227 other cell types or tissues"/>
</dbReference>
<dbReference type="ExpressionAtlas" id="P50637">
    <property type="expression patterns" value="baseline and differential"/>
</dbReference>
<dbReference type="GO" id="GO:0005829">
    <property type="term" value="C:cytosol"/>
    <property type="evidence" value="ECO:0007669"/>
    <property type="project" value="Ensembl"/>
</dbReference>
<dbReference type="GO" id="GO:0005741">
    <property type="term" value="C:mitochondrial outer membrane"/>
    <property type="evidence" value="ECO:0007669"/>
    <property type="project" value="Ensembl"/>
</dbReference>
<dbReference type="GO" id="GO:0005739">
    <property type="term" value="C:mitochondrion"/>
    <property type="evidence" value="ECO:0000314"/>
    <property type="project" value="ParkinsonsUK-UCL"/>
</dbReference>
<dbReference type="GO" id="GO:0005497">
    <property type="term" value="F:androgen binding"/>
    <property type="evidence" value="ECO:0007669"/>
    <property type="project" value="Ensembl"/>
</dbReference>
<dbReference type="GO" id="GO:0008503">
    <property type="term" value="F:benzodiazepine receptor activity"/>
    <property type="evidence" value="ECO:0007669"/>
    <property type="project" value="Ensembl"/>
</dbReference>
<dbReference type="GO" id="GO:0044325">
    <property type="term" value="F:transmembrane transporter binding"/>
    <property type="evidence" value="ECO:0000353"/>
    <property type="project" value="ParkinsonsUK-UCL"/>
</dbReference>
<dbReference type="GO" id="GO:0030325">
    <property type="term" value="P:adrenal gland development"/>
    <property type="evidence" value="ECO:0007669"/>
    <property type="project" value="Ensembl"/>
</dbReference>
<dbReference type="GO" id="GO:0048266">
    <property type="term" value="P:behavioral response to pain"/>
    <property type="evidence" value="ECO:0007669"/>
    <property type="project" value="Ensembl"/>
</dbReference>
<dbReference type="GO" id="GO:0071476">
    <property type="term" value="P:cellular hypotonic response"/>
    <property type="evidence" value="ECO:0007669"/>
    <property type="project" value="Ensembl"/>
</dbReference>
<dbReference type="GO" id="GO:0071222">
    <property type="term" value="P:cellular response to lipopolysaccharide"/>
    <property type="evidence" value="ECO:0007669"/>
    <property type="project" value="Ensembl"/>
</dbReference>
<dbReference type="GO" id="GO:0071294">
    <property type="term" value="P:cellular response to zinc ion"/>
    <property type="evidence" value="ECO:0007669"/>
    <property type="project" value="Ensembl"/>
</dbReference>
<dbReference type="GO" id="GO:0006821">
    <property type="term" value="P:chloride transport"/>
    <property type="evidence" value="ECO:0007669"/>
    <property type="project" value="Ensembl"/>
</dbReference>
<dbReference type="GO" id="GO:0042632">
    <property type="term" value="P:cholesterol homeostasis"/>
    <property type="evidence" value="ECO:0007669"/>
    <property type="project" value="Ensembl"/>
</dbReference>
<dbReference type="GO" id="GO:0060242">
    <property type="term" value="P:contact inhibition"/>
    <property type="evidence" value="ECO:0007669"/>
    <property type="project" value="Ensembl"/>
</dbReference>
<dbReference type="GO" id="GO:0072655">
    <property type="term" value="P:establishment of protein localization to mitochondrion"/>
    <property type="evidence" value="ECO:0000315"/>
    <property type="project" value="ParkinsonsUK-UCL"/>
</dbReference>
<dbReference type="GO" id="GO:0008347">
    <property type="term" value="P:glial cell migration"/>
    <property type="evidence" value="ECO:0007669"/>
    <property type="project" value="Ensembl"/>
</dbReference>
<dbReference type="GO" id="GO:0006869">
    <property type="term" value="P:lipid transport"/>
    <property type="evidence" value="ECO:0007669"/>
    <property type="project" value="UniProtKB-KW"/>
</dbReference>
<dbReference type="GO" id="GO:0072656">
    <property type="term" value="P:maintenance of protein location in mitochondrion"/>
    <property type="evidence" value="ECO:0000315"/>
    <property type="project" value="ParkinsonsUK-UCL"/>
</dbReference>
<dbReference type="GO" id="GO:1903579">
    <property type="term" value="P:negative regulation of ATP metabolic process"/>
    <property type="evidence" value="ECO:0000315"/>
    <property type="project" value="ParkinsonsUK-UCL"/>
</dbReference>
<dbReference type="GO" id="GO:2000853">
    <property type="term" value="P:negative regulation of corticosterone secretion"/>
    <property type="evidence" value="ECO:0007669"/>
    <property type="project" value="Ensembl"/>
</dbReference>
<dbReference type="GO" id="GO:0060253">
    <property type="term" value="P:negative regulation of glial cell proliferation"/>
    <property type="evidence" value="ECO:0007669"/>
    <property type="project" value="Ensembl"/>
</dbReference>
<dbReference type="GO" id="GO:1901525">
    <property type="term" value="P:negative regulation of mitophagy"/>
    <property type="evidence" value="ECO:0000315"/>
    <property type="project" value="ParkinsonsUK-UCL"/>
</dbReference>
<dbReference type="GO" id="GO:0045019">
    <property type="term" value="P:negative regulation of nitric oxide biosynthetic process"/>
    <property type="evidence" value="ECO:0007669"/>
    <property type="project" value="Ensembl"/>
</dbReference>
<dbReference type="GO" id="GO:0031397">
    <property type="term" value="P:negative regulation of protein ubiquitination"/>
    <property type="evidence" value="ECO:0000315"/>
    <property type="project" value="ParkinsonsUK-UCL"/>
</dbReference>
<dbReference type="GO" id="GO:0032720">
    <property type="term" value="P:negative regulation of tumor necrosis factor production"/>
    <property type="evidence" value="ECO:0007669"/>
    <property type="project" value="Ensembl"/>
</dbReference>
<dbReference type="GO" id="GO:0014012">
    <property type="term" value="P:peripheral nervous system axon regeneration"/>
    <property type="evidence" value="ECO:0007669"/>
    <property type="project" value="Ensembl"/>
</dbReference>
<dbReference type="GO" id="GO:0043065">
    <property type="term" value="P:positive regulation of apoptotic process"/>
    <property type="evidence" value="ECO:0007669"/>
    <property type="project" value="Ensembl"/>
</dbReference>
<dbReference type="GO" id="GO:0051928">
    <property type="term" value="P:positive regulation of calcium ion transport"/>
    <property type="evidence" value="ECO:0007669"/>
    <property type="project" value="Ensembl"/>
</dbReference>
<dbReference type="GO" id="GO:0060252">
    <property type="term" value="P:positive regulation of glial cell proliferation"/>
    <property type="evidence" value="ECO:0007669"/>
    <property type="project" value="Ensembl"/>
</dbReference>
<dbReference type="GO" id="GO:0051901">
    <property type="term" value="P:positive regulation of mitochondrial depolarization"/>
    <property type="evidence" value="ECO:0007669"/>
    <property type="project" value="Ensembl"/>
</dbReference>
<dbReference type="GO" id="GO:0062100">
    <property type="term" value="P:positive regulation of programmed necrotic cell death"/>
    <property type="evidence" value="ECO:0007669"/>
    <property type="project" value="Ensembl"/>
</dbReference>
<dbReference type="GO" id="GO:2000379">
    <property type="term" value="P:positive regulation of reactive oxygen species metabolic process"/>
    <property type="evidence" value="ECO:0000315"/>
    <property type="project" value="ParkinsonsUK-UCL"/>
</dbReference>
<dbReference type="GO" id="GO:0050810">
    <property type="term" value="P:regulation of steroid biosynthetic process"/>
    <property type="evidence" value="ECO:0007669"/>
    <property type="project" value="Ensembl"/>
</dbReference>
<dbReference type="GO" id="GO:1905144">
    <property type="term" value="P:response to acetylcholine"/>
    <property type="evidence" value="ECO:0007669"/>
    <property type="project" value="Ensembl"/>
</dbReference>
<dbReference type="GO" id="GO:0010042">
    <property type="term" value="P:response to manganese ion"/>
    <property type="evidence" value="ECO:0007669"/>
    <property type="project" value="Ensembl"/>
</dbReference>
<dbReference type="GO" id="GO:0032570">
    <property type="term" value="P:response to progesterone"/>
    <property type="evidence" value="ECO:0007669"/>
    <property type="project" value="Ensembl"/>
</dbReference>
<dbReference type="GO" id="GO:0033574">
    <property type="term" value="P:response to testosterone"/>
    <property type="evidence" value="ECO:0007669"/>
    <property type="project" value="Ensembl"/>
</dbReference>
<dbReference type="GO" id="GO:0010266">
    <property type="term" value="P:response to vitamin B1"/>
    <property type="evidence" value="ECO:0007669"/>
    <property type="project" value="Ensembl"/>
</dbReference>
<dbReference type="GO" id="GO:0009410">
    <property type="term" value="P:response to xenobiotic stimulus"/>
    <property type="evidence" value="ECO:0007669"/>
    <property type="project" value="Ensembl"/>
</dbReference>
<dbReference type="GO" id="GO:0006694">
    <property type="term" value="P:steroid biosynthetic process"/>
    <property type="evidence" value="ECO:0007669"/>
    <property type="project" value="Ensembl"/>
</dbReference>
<dbReference type="CDD" id="cd15904">
    <property type="entry name" value="TSPO_MBR"/>
    <property type="match status" value="1"/>
</dbReference>
<dbReference type="FunFam" id="1.20.1260.100:FF:000001">
    <property type="entry name" value="translocator protein 2"/>
    <property type="match status" value="1"/>
</dbReference>
<dbReference type="Gene3D" id="1.20.1260.100">
    <property type="entry name" value="TspO/MBR protein"/>
    <property type="match status" value="1"/>
</dbReference>
<dbReference type="InterPro" id="IPR038330">
    <property type="entry name" value="TspO/MBR-related_sf"/>
</dbReference>
<dbReference type="InterPro" id="IPR004307">
    <property type="entry name" value="TspO_MBR"/>
</dbReference>
<dbReference type="PANTHER" id="PTHR10057">
    <property type="entry name" value="PERIPHERAL-TYPE BENZODIAZEPINE RECEPTOR"/>
    <property type="match status" value="1"/>
</dbReference>
<dbReference type="PANTHER" id="PTHR10057:SF5">
    <property type="entry name" value="TRANSLOCATOR PROTEIN"/>
    <property type="match status" value="1"/>
</dbReference>
<dbReference type="Pfam" id="PF03073">
    <property type="entry name" value="TspO_MBR"/>
    <property type="match status" value="1"/>
</dbReference>
<dbReference type="PIRSF" id="PIRSF005859">
    <property type="entry name" value="PBR"/>
    <property type="match status" value="1"/>
</dbReference>
<proteinExistence type="evidence at protein level"/>
<reference key="1">
    <citation type="journal article" date="1994" name="Mol. Pharmacol.">
        <title>In vitro reconstitution of a functional peripheral-type benzodiazepine receptor from mouse Leydig tumor cells.</title>
        <authorList>
            <person name="Garnier M."/>
            <person name="Dimchev A.B."/>
            <person name="Boujrad N."/>
            <person name="Price J.M."/>
            <person name="Musto N.A."/>
            <person name="Papadopoulos V."/>
        </authorList>
    </citation>
    <scope>NUCLEOTIDE SEQUENCE [MRNA]</scope>
    <scope>FUNCTION</scope>
    <scope>SUBCELLULAR LOCATION</scope>
    <source>
        <tissue>Testis</tissue>
    </source>
</reference>
<reference key="2">
    <citation type="journal article" date="1994" name="J. Biol. Chem.">
        <title>Induction of peripheral-type benzodiazepine receptors during differentiation of mouse erythroleukemia cells. A possible involvement of these receptors in heme biosynthesis.</title>
        <authorList>
            <person name="Taketani S."/>
            <person name="Kohno H."/>
            <person name="Okuda M."/>
            <person name="Furukawa T."/>
            <person name="Tokunaga R."/>
        </authorList>
    </citation>
    <scope>NUCLEOTIDE SEQUENCE [MRNA]</scope>
    <scope>INDUCTION</scope>
    <source>
        <strain>BALB/cJ</strain>
        <tissue>Erythroleukemia</tissue>
    </source>
</reference>
<reference evidence="13" key="3">
    <citation type="journal article" date="2001" name="Mamm. Genome">
        <title>High-throughput sequence identification of gene coding variants within alcohol-related QTLs.</title>
        <authorList>
            <person name="Ehringer M.A."/>
            <person name="Thompson J."/>
            <person name="Conroy O."/>
            <person name="Xu Y."/>
            <person name="Yang F."/>
            <person name="Canniff J."/>
            <person name="Beeson M."/>
            <person name="Gordon L."/>
            <person name="Bennett B."/>
            <person name="Johnson T.E."/>
            <person name="Sikela J.M."/>
        </authorList>
    </citation>
    <scope>NUCLEOTIDE SEQUENCE [MRNA]</scope>
    <source>
        <strain evidence="12">ILS</strain>
        <strain evidence="13">ISS</strain>
    </source>
</reference>
<reference key="4">
    <citation type="journal article" date="2005" name="Science">
        <title>The transcriptional landscape of the mammalian genome.</title>
        <authorList>
            <person name="Carninci P."/>
            <person name="Kasukawa T."/>
            <person name="Katayama S."/>
            <person name="Gough J."/>
            <person name="Frith M.C."/>
            <person name="Maeda N."/>
            <person name="Oyama R."/>
            <person name="Ravasi T."/>
            <person name="Lenhard B."/>
            <person name="Wells C."/>
            <person name="Kodzius R."/>
            <person name="Shimokawa K."/>
            <person name="Bajic V.B."/>
            <person name="Brenner S.E."/>
            <person name="Batalov S."/>
            <person name="Forrest A.R."/>
            <person name="Zavolan M."/>
            <person name="Davis M.J."/>
            <person name="Wilming L.G."/>
            <person name="Aidinis V."/>
            <person name="Allen J.E."/>
            <person name="Ambesi-Impiombato A."/>
            <person name="Apweiler R."/>
            <person name="Aturaliya R.N."/>
            <person name="Bailey T.L."/>
            <person name="Bansal M."/>
            <person name="Baxter L."/>
            <person name="Beisel K.W."/>
            <person name="Bersano T."/>
            <person name="Bono H."/>
            <person name="Chalk A.M."/>
            <person name="Chiu K.P."/>
            <person name="Choudhary V."/>
            <person name="Christoffels A."/>
            <person name="Clutterbuck D.R."/>
            <person name="Crowe M.L."/>
            <person name="Dalla E."/>
            <person name="Dalrymple B.P."/>
            <person name="de Bono B."/>
            <person name="Della Gatta G."/>
            <person name="di Bernardo D."/>
            <person name="Down T."/>
            <person name="Engstrom P."/>
            <person name="Fagiolini M."/>
            <person name="Faulkner G."/>
            <person name="Fletcher C.F."/>
            <person name="Fukushima T."/>
            <person name="Furuno M."/>
            <person name="Futaki S."/>
            <person name="Gariboldi M."/>
            <person name="Georgii-Hemming P."/>
            <person name="Gingeras T.R."/>
            <person name="Gojobori T."/>
            <person name="Green R.E."/>
            <person name="Gustincich S."/>
            <person name="Harbers M."/>
            <person name="Hayashi Y."/>
            <person name="Hensch T.K."/>
            <person name="Hirokawa N."/>
            <person name="Hill D."/>
            <person name="Huminiecki L."/>
            <person name="Iacono M."/>
            <person name="Ikeo K."/>
            <person name="Iwama A."/>
            <person name="Ishikawa T."/>
            <person name="Jakt M."/>
            <person name="Kanapin A."/>
            <person name="Katoh M."/>
            <person name="Kawasawa Y."/>
            <person name="Kelso J."/>
            <person name="Kitamura H."/>
            <person name="Kitano H."/>
            <person name="Kollias G."/>
            <person name="Krishnan S.P."/>
            <person name="Kruger A."/>
            <person name="Kummerfeld S.K."/>
            <person name="Kurochkin I.V."/>
            <person name="Lareau L.F."/>
            <person name="Lazarevic D."/>
            <person name="Lipovich L."/>
            <person name="Liu J."/>
            <person name="Liuni S."/>
            <person name="McWilliam S."/>
            <person name="Madan Babu M."/>
            <person name="Madera M."/>
            <person name="Marchionni L."/>
            <person name="Matsuda H."/>
            <person name="Matsuzawa S."/>
            <person name="Miki H."/>
            <person name="Mignone F."/>
            <person name="Miyake S."/>
            <person name="Morris K."/>
            <person name="Mottagui-Tabar S."/>
            <person name="Mulder N."/>
            <person name="Nakano N."/>
            <person name="Nakauchi H."/>
            <person name="Ng P."/>
            <person name="Nilsson R."/>
            <person name="Nishiguchi S."/>
            <person name="Nishikawa S."/>
            <person name="Nori F."/>
            <person name="Ohara O."/>
            <person name="Okazaki Y."/>
            <person name="Orlando V."/>
            <person name="Pang K.C."/>
            <person name="Pavan W.J."/>
            <person name="Pavesi G."/>
            <person name="Pesole G."/>
            <person name="Petrovsky N."/>
            <person name="Piazza S."/>
            <person name="Reed J."/>
            <person name="Reid J.F."/>
            <person name="Ring B.Z."/>
            <person name="Ringwald M."/>
            <person name="Rost B."/>
            <person name="Ruan Y."/>
            <person name="Salzberg S.L."/>
            <person name="Sandelin A."/>
            <person name="Schneider C."/>
            <person name="Schoenbach C."/>
            <person name="Sekiguchi K."/>
            <person name="Semple C.A."/>
            <person name="Seno S."/>
            <person name="Sessa L."/>
            <person name="Sheng Y."/>
            <person name="Shibata Y."/>
            <person name="Shimada H."/>
            <person name="Shimada K."/>
            <person name="Silva D."/>
            <person name="Sinclair B."/>
            <person name="Sperling S."/>
            <person name="Stupka E."/>
            <person name="Sugiura K."/>
            <person name="Sultana R."/>
            <person name="Takenaka Y."/>
            <person name="Taki K."/>
            <person name="Tammoja K."/>
            <person name="Tan S.L."/>
            <person name="Tang S."/>
            <person name="Taylor M.S."/>
            <person name="Tegner J."/>
            <person name="Teichmann S.A."/>
            <person name="Ueda H.R."/>
            <person name="van Nimwegen E."/>
            <person name="Verardo R."/>
            <person name="Wei C.L."/>
            <person name="Yagi K."/>
            <person name="Yamanishi H."/>
            <person name="Zabarovsky E."/>
            <person name="Zhu S."/>
            <person name="Zimmer A."/>
            <person name="Hide W."/>
            <person name="Bult C."/>
            <person name="Grimmond S.M."/>
            <person name="Teasdale R.D."/>
            <person name="Liu E.T."/>
            <person name="Brusic V."/>
            <person name="Quackenbush J."/>
            <person name="Wahlestedt C."/>
            <person name="Mattick J.S."/>
            <person name="Hume D.A."/>
            <person name="Kai C."/>
            <person name="Sasaki D."/>
            <person name="Tomaru Y."/>
            <person name="Fukuda S."/>
            <person name="Kanamori-Katayama M."/>
            <person name="Suzuki M."/>
            <person name="Aoki J."/>
            <person name="Arakawa T."/>
            <person name="Iida J."/>
            <person name="Imamura K."/>
            <person name="Itoh M."/>
            <person name="Kato T."/>
            <person name="Kawaji H."/>
            <person name="Kawagashira N."/>
            <person name="Kawashima T."/>
            <person name="Kojima M."/>
            <person name="Kondo S."/>
            <person name="Konno H."/>
            <person name="Nakano K."/>
            <person name="Ninomiya N."/>
            <person name="Nishio T."/>
            <person name="Okada M."/>
            <person name="Plessy C."/>
            <person name="Shibata K."/>
            <person name="Shiraki T."/>
            <person name="Suzuki S."/>
            <person name="Tagami M."/>
            <person name="Waki K."/>
            <person name="Watahiki A."/>
            <person name="Okamura-Oho Y."/>
            <person name="Suzuki H."/>
            <person name="Kawai J."/>
            <person name="Hayashizaki Y."/>
        </authorList>
    </citation>
    <scope>NUCLEOTIDE SEQUENCE [LARGE SCALE MRNA]</scope>
    <source>
        <strain evidence="14">C57BL/6J</strain>
        <strain evidence="15">NOD</strain>
        <tissue evidence="14">Bone marrow</tissue>
        <tissue evidence="16">Kidney</tissue>
        <tissue evidence="18">Lung</tissue>
        <tissue evidence="15">Spleen</tissue>
        <tissue evidence="17">Uterus</tissue>
    </source>
</reference>
<reference key="5">
    <citation type="submission" date="2005-09" db="EMBL/GenBank/DDBJ databases">
        <authorList>
            <person name="Mural R.J."/>
            <person name="Adams M.D."/>
            <person name="Myers E.W."/>
            <person name="Smith H.O."/>
            <person name="Venter J.C."/>
        </authorList>
    </citation>
    <scope>NUCLEOTIDE SEQUENCE [LARGE SCALE GENOMIC DNA]</scope>
</reference>
<reference key="6">
    <citation type="journal article" date="2004" name="Genome Res.">
        <title>The status, quality, and expansion of the NIH full-length cDNA project: the Mammalian Gene Collection (MGC).</title>
        <authorList>
            <consortium name="The MGC Project Team"/>
        </authorList>
    </citation>
    <scope>NUCLEOTIDE SEQUENCE [LARGE SCALE MRNA]</scope>
    <source>
        <strain evidence="11">Czech II</strain>
        <tissue evidence="11">Mammary tumor</tissue>
    </source>
</reference>
<reference key="7">
    <citation type="journal article" date="1995" name="Gene">
        <title>Comparison of repetitive elements in the third intron of human and rodent mitochondrial benzodiazepine receptor-encoding genes.</title>
        <authorList>
            <person name="Yakovlev A.G."/>
            <person name="Ruffo M."/>
            <person name="Jurka J."/>
            <person name="Krueger K.E."/>
        </authorList>
    </citation>
    <scope>NUCLEOTIDE SEQUENCE [GENOMIC DNA] OF 95-125</scope>
</reference>
<reference key="8">
    <citation type="journal article" date="1998" name="Endocrinology">
        <title>Peripheral-type benzodiazepine receptor function in cholesterol transport. Identification of a putative cholesterol recognition/interaction amino acid sequence and consensus pattern.</title>
        <authorList>
            <person name="Li H."/>
            <person name="Papadopoulos V."/>
        </authorList>
    </citation>
    <scope>FUNCTION</scope>
    <scope>MUTAGENESIS OF TYR-153 AND ARG-156</scope>
</reference>
<reference key="9">
    <citation type="journal article" date="2010" name="Cell">
        <title>A tissue-specific atlas of mouse protein phosphorylation and expression.</title>
        <authorList>
            <person name="Huttlin E.L."/>
            <person name="Jedrychowski M.P."/>
            <person name="Elias J.E."/>
            <person name="Goswami T."/>
            <person name="Rad R."/>
            <person name="Beausoleil S.A."/>
            <person name="Villen J."/>
            <person name="Haas W."/>
            <person name="Sowa M.E."/>
            <person name="Gygi S.P."/>
        </authorList>
    </citation>
    <scope>IDENTIFICATION BY MASS SPECTROMETRY [LARGE SCALE ANALYSIS]</scope>
    <source>
        <tissue>Brown adipose tissue</tissue>
        <tissue>Spleen</tissue>
    </source>
</reference>
<reference key="10">
    <citation type="journal article" date="2014" name="Clin. Sci.">
        <title>Targeting mitochondrial 18kDa translocator protein (TSPO) regulates macrophage cholesterol efflux and lipid phenotype.</title>
        <authorList>
            <person name="Taylor J.M."/>
            <person name="Allen A.M."/>
            <person name="Graham A."/>
        </authorList>
    </citation>
    <scope>FUNCTION</scope>
</reference>
<reference key="11">
    <citation type="journal article" date="2014" name="Endocrinology">
        <title>Translocator protein/peripheral benzodiazepine receptor is not required for steroid hormone biosynthesis.</title>
        <authorList>
            <person name="Morohaku K."/>
            <person name="Pelton S.H."/>
            <person name="Daugherty D.J."/>
            <person name="Butler W.R."/>
            <person name="Deng W."/>
            <person name="Selvaraj V."/>
        </authorList>
    </citation>
    <scope>FUNCTION</scope>
    <scope>DISRUPTION PHENOTYPE</scope>
    <scope>TISSUE SPECIFICITY</scope>
</reference>
<reference key="12">
    <citation type="journal article" date="2014" name="J. Biol. Chem.">
        <title>Peripheral benzodiazepine receptor/translocator protein global knockout mice are viable with no effects on steroid hormone biosynthesis.</title>
        <authorList>
            <person name="Tu L.N."/>
            <person name="Morohaku K."/>
            <person name="Manna P.R."/>
            <person name="Pelton S.H."/>
            <person name="Butler W.R."/>
            <person name="Stocco D.M."/>
            <person name="Selvaraj V."/>
        </authorList>
    </citation>
    <scope>DISRUPTION PHENOTYPE</scope>
    <scope>TISSUE SPECIFICITY</scope>
</reference>
<reference key="13">
    <citation type="journal article" date="2014" name="Science">
        <title>Structure of the mitochondrial translocator protein in complex with a diagnostic ligand.</title>
        <authorList>
            <person name="Jaremko L."/>
            <person name="Jaremko M."/>
            <person name="Giller K."/>
            <person name="Becker S."/>
            <person name="Zweckstetter M."/>
        </authorList>
    </citation>
    <scope>STRUCTURE BY NMR IN COMPLEX WITH SYNTHETIC LIGAND PK11195</scope>
    <scope>TOPOLOGY</scope>
    <scope>SUBCELLULAR LOCATION</scope>
</reference>
<reference evidence="19" key="14">
    <citation type="journal article" date="2015" name="ChemBioChem">
        <title>Structural Integrity of the A147T Polymorph of Mammalian TSPO.</title>
        <authorList>
            <person name="Jaremko M."/>
            <person name="Jaremko L."/>
            <person name="Giller K."/>
            <person name="Becker S."/>
            <person name="Zweckstetter M."/>
        </authorList>
    </citation>
    <scope>STRUCTURE BY NMR OF MUTANT THR-147 IN COMPLEX WITH SYNTHETIC LIGAND PK11195</scope>
    <scope>MUTAGENESIS OF ALA-147</scope>
</reference>
<organism>
    <name type="scientific">Mus musculus</name>
    <name type="common">Mouse</name>
    <dbReference type="NCBI Taxonomy" id="10090"/>
    <lineage>
        <taxon>Eukaryota</taxon>
        <taxon>Metazoa</taxon>
        <taxon>Chordata</taxon>
        <taxon>Craniata</taxon>
        <taxon>Vertebrata</taxon>
        <taxon>Euteleostomi</taxon>
        <taxon>Mammalia</taxon>
        <taxon>Eutheria</taxon>
        <taxon>Euarchontoglires</taxon>
        <taxon>Glires</taxon>
        <taxon>Rodentia</taxon>
        <taxon>Myomorpha</taxon>
        <taxon>Muroidea</taxon>
        <taxon>Muridae</taxon>
        <taxon>Murinae</taxon>
        <taxon>Mus</taxon>
        <taxon>Mus</taxon>
    </lineage>
</organism>
<accession>P50637</accession>
<accession>Q541E3</accession>
<accession>Q62118</accession>
<accession>Q6LCZ0</accession>
<accession>Q99M32</accession>
<feature type="chain" id="PRO_0000190998" description="Translocator protein">
    <location>
        <begin position="1"/>
        <end position="169"/>
    </location>
</feature>
<feature type="topological domain" description="Mitochondrial intermembrane" evidence="3">
    <location>
        <begin position="1"/>
        <end position="5"/>
    </location>
</feature>
<feature type="transmembrane region" description="Helical; Name=1">
    <location>
        <begin position="6"/>
        <end position="26"/>
    </location>
</feature>
<feature type="topological domain" description="Cytoplasmic" evidence="3">
    <location>
        <begin position="27"/>
        <end position="46"/>
    </location>
</feature>
<feature type="transmembrane region" description="Helical; Name=2">
    <location>
        <begin position="47"/>
        <end position="67"/>
    </location>
</feature>
<feature type="topological domain" description="Mitochondrial intermembrane" evidence="3">
    <location>
        <begin position="68"/>
        <end position="79"/>
    </location>
</feature>
<feature type="transmembrane region" description="Helical; Name=3">
    <location>
        <begin position="80"/>
        <end position="100"/>
    </location>
</feature>
<feature type="topological domain" description="Cytoplasmic" evidence="3">
    <location>
        <begin position="101"/>
        <end position="105"/>
    </location>
</feature>
<feature type="transmembrane region" description="Helical; Name=4">
    <location>
        <begin position="106"/>
        <end position="126"/>
    </location>
</feature>
<feature type="topological domain" description="Mitochondrial intermembrane" evidence="3">
    <location>
        <begin position="127"/>
        <end position="134"/>
    </location>
</feature>
<feature type="transmembrane region" description="Helical; Name=5">
    <location>
        <begin position="135"/>
        <end position="155"/>
    </location>
</feature>
<feature type="topological domain" description="Cytoplasmic" evidence="3">
    <location>
        <begin position="156"/>
        <end position="169"/>
    </location>
</feature>
<feature type="mutagenesis site" description="No effect." evidence="6">
    <original>A</original>
    <variation>T</variation>
    <location>
        <position position="147"/>
    </location>
</feature>
<feature type="mutagenesis site" description="Abolishes cholesterol transport." evidence="9">
    <original>Y</original>
    <variation>S</variation>
    <location>
        <position position="153"/>
    </location>
</feature>
<feature type="mutagenesis site" description="Abolishes cholesterol transport." evidence="9">
    <original>R</original>
    <variation>L</variation>
    <location>
        <position position="156"/>
    </location>
</feature>
<feature type="sequence conflict" description="In Ref. 6; AAH02055." evidence="10" ref="6">
    <original>S</original>
    <variation>G</variation>
    <location>
        <position position="36"/>
    </location>
</feature>
<feature type="sequence conflict" description="In Ref. 2; BAA04749." evidence="10" ref="2">
    <original>G</original>
    <variation>A</variation>
    <location>
        <position position="54"/>
    </location>
</feature>
<feature type="sequence conflict" description="In Ref. 2; BAA04749 and 6; AAH02055." evidence="10" ref="2 6">
    <original>P</original>
    <variation>A</variation>
    <location>
        <position position="168"/>
    </location>
</feature>
<feature type="helix" evidence="21">
    <location>
        <begin position="2"/>
        <end position="4"/>
    </location>
</feature>
<feature type="helix" evidence="20">
    <location>
        <begin position="6"/>
        <end position="36"/>
    </location>
</feature>
<feature type="helix" evidence="20">
    <location>
        <begin position="46"/>
        <end position="49"/>
    </location>
</feature>
<feature type="helix" evidence="20">
    <location>
        <begin position="52"/>
        <end position="71"/>
    </location>
</feature>
<feature type="strand" evidence="20">
    <location>
        <begin position="72"/>
        <end position="75"/>
    </location>
</feature>
<feature type="helix" evidence="20">
    <location>
        <begin position="76"/>
        <end position="93"/>
    </location>
</feature>
<feature type="helix" evidence="20">
    <location>
        <begin position="96"/>
        <end position="98"/>
    </location>
</feature>
<feature type="turn" evidence="20">
    <location>
        <begin position="99"/>
        <end position="103"/>
    </location>
</feature>
<feature type="helix" evidence="20">
    <location>
        <begin position="105"/>
        <end position="108"/>
    </location>
</feature>
<feature type="helix" evidence="20">
    <location>
        <begin position="109"/>
        <end position="125"/>
    </location>
</feature>
<feature type="turn" evidence="20">
    <location>
        <begin position="126"/>
        <end position="129"/>
    </location>
</feature>
<feature type="helix" evidence="20">
    <location>
        <begin position="131"/>
        <end position="137"/>
    </location>
</feature>
<feature type="helix" evidence="20">
    <location>
        <begin position="138"/>
        <end position="140"/>
    </location>
</feature>
<feature type="helix" evidence="20">
    <location>
        <begin position="141"/>
        <end position="158"/>
    </location>
</feature>
<feature type="helix" evidence="21">
    <location>
        <begin position="164"/>
        <end position="166"/>
    </location>
</feature>
<evidence type="ECO:0000250" key="1"/>
<evidence type="ECO:0000269" key="2">
    <source>
    </source>
</evidence>
<evidence type="ECO:0000269" key="3">
    <source>
    </source>
</evidence>
<evidence type="ECO:0000269" key="4">
    <source>
    </source>
</evidence>
<evidence type="ECO:0000269" key="5">
    <source>
    </source>
</evidence>
<evidence type="ECO:0000269" key="6">
    <source>
    </source>
</evidence>
<evidence type="ECO:0000269" key="7">
    <source>
    </source>
</evidence>
<evidence type="ECO:0000269" key="8">
    <source>
    </source>
</evidence>
<evidence type="ECO:0000269" key="9">
    <source>
    </source>
</evidence>
<evidence type="ECO:0000305" key="10"/>
<evidence type="ECO:0000312" key="11">
    <source>
        <dbReference type="EMBL" id="AAH02055.1"/>
    </source>
</evidence>
<evidence type="ECO:0000312" key="12">
    <source>
        <dbReference type="EMBL" id="AAL87529.1"/>
    </source>
</evidence>
<evidence type="ECO:0000312" key="13">
    <source>
        <dbReference type="EMBL" id="AAL87530.1"/>
    </source>
</evidence>
<evidence type="ECO:0000312" key="14">
    <source>
        <dbReference type="EMBL" id="BAE29056.1"/>
    </source>
</evidence>
<evidence type="ECO:0000312" key="15">
    <source>
        <dbReference type="EMBL" id="BAE33730.1"/>
    </source>
</evidence>
<evidence type="ECO:0000312" key="16">
    <source>
        <dbReference type="EMBL" id="BAE38192.1"/>
    </source>
</evidence>
<evidence type="ECO:0000312" key="17">
    <source>
        <dbReference type="EMBL" id="BAE38396.1"/>
    </source>
</evidence>
<evidence type="ECO:0000312" key="18">
    <source>
        <dbReference type="EMBL" id="BAE38585.1"/>
    </source>
</evidence>
<evidence type="ECO:0007744" key="19">
    <source>
        <dbReference type="PDB" id="2N02"/>
    </source>
</evidence>
<evidence type="ECO:0007829" key="20">
    <source>
        <dbReference type="PDB" id="2MGY"/>
    </source>
</evidence>
<evidence type="ECO:0007829" key="21">
    <source>
        <dbReference type="PDB" id="2N02"/>
    </source>
</evidence>
<keyword id="KW-0002">3D-structure</keyword>
<keyword id="KW-0445">Lipid transport</keyword>
<keyword id="KW-0472">Membrane</keyword>
<keyword id="KW-0496">Mitochondrion</keyword>
<keyword id="KW-0675">Receptor</keyword>
<keyword id="KW-1185">Reference proteome</keyword>
<keyword id="KW-0812">Transmembrane</keyword>
<keyword id="KW-1133">Transmembrane helix</keyword>
<keyword id="KW-0813">Transport</keyword>
<gene>
    <name type="primary">Tspo</name>
    <name type="synonym">Bzrp</name>
    <name type="synonym">Mbr</name>
</gene>
<name>TSPO_MOUSE</name>
<comment type="function">
    <text evidence="1 2 4 5 7 9">Can bind protoporphyrin IX and may play a role in the transport of porphyrins and heme (By similarity). Was initially identified as peripheral-type benzodiazepine receptor; can also bind isoquinoline carboxamides. Promotes the transport of cholesterol across mitochondrial membranes and may play a role in lipid metabolism (PubMed:9832438, PubMed:24814875), but its precise physiological role is controversial. According to some reports, it is not required for steroid hormone biosynthesis (PubMed:24174323, PubMed:24936060).</text>
</comment>
<comment type="subunit">
    <text evidence="1">Interacts with TSPOAP1. Interacts with MOST-1. May interact with STAR.</text>
</comment>
<comment type="subcellular location">
    <subcellularLocation>
        <location evidence="1">Mitochondrion membrane</location>
        <topology evidence="1">Multi-pass membrane protein</topology>
    </subcellularLocation>
    <subcellularLocation>
        <location>Membrane</location>
        <topology>Multi-pass membrane protein</topology>
    </subcellularLocation>
</comment>
<comment type="tissue specificity">
    <text evidence="2 5">Detected in liver (at protein level). Ubiquitous.</text>
</comment>
<comment type="induction">
    <text evidence="8">By dimethyl sulfoxide and diazepam.</text>
</comment>
<comment type="disruption phenotype">
    <text evidence="2 5">No obvious phenotype. Mice are viable and fertile and present only very minor changes in gonadal and adrenal steroid hormone production. testis-specific gene disruption (PubMed:24174323) does not affect testosterone production, gametogenesis and male fertility.</text>
</comment>
<comment type="similarity">
    <text evidence="10">Belongs to the TspO/BZRP family.</text>
</comment>
<protein>
    <recommendedName>
        <fullName>Translocator protein</fullName>
    </recommendedName>
    <alternativeName>
        <fullName>Mitochondrial benzodiazepine receptor</fullName>
    </alternativeName>
    <alternativeName>
        <fullName>PKBS</fullName>
    </alternativeName>
    <alternativeName>
        <fullName>Peripheral-type benzodiazepine receptor</fullName>
        <shortName>PBR</shortName>
    </alternativeName>
</protein>